<evidence type="ECO:0000255" key="1">
    <source>
        <dbReference type="HAMAP-Rule" id="MF_00083"/>
    </source>
</evidence>
<gene>
    <name evidence="1" type="primary">pth</name>
    <name type="ordered locus">Mrad2831_4125</name>
</gene>
<reference key="1">
    <citation type="submission" date="2008-03" db="EMBL/GenBank/DDBJ databases">
        <title>Complete sequence of chromosome of Methylobacterium radiotolerans JCM 2831.</title>
        <authorList>
            <consortium name="US DOE Joint Genome Institute"/>
            <person name="Copeland A."/>
            <person name="Lucas S."/>
            <person name="Lapidus A."/>
            <person name="Glavina del Rio T."/>
            <person name="Dalin E."/>
            <person name="Tice H."/>
            <person name="Bruce D."/>
            <person name="Goodwin L."/>
            <person name="Pitluck S."/>
            <person name="Kiss H."/>
            <person name="Brettin T."/>
            <person name="Detter J.C."/>
            <person name="Han C."/>
            <person name="Kuske C.R."/>
            <person name="Schmutz J."/>
            <person name="Larimer F."/>
            <person name="Land M."/>
            <person name="Hauser L."/>
            <person name="Kyrpides N."/>
            <person name="Mikhailova N."/>
            <person name="Marx C.J."/>
            <person name="Richardson P."/>
        </authorList>
    </citation>
    <scope>NUCLEOTIDE SEQUENCE [LARGE SCALE GENOMIC DNA]</scope>
    <source>
        <strain>ATCC 27329 / DSM 1819 / JCM 2831 / NBRC 15690 / NCIMB 10815 / 0-1</strain>
    </source>
</reference>
<feature type="chain" id="PRO_1000092957" description="Peptidyl-tRNA hydrolase">
    <location>
        <begin position="1"/>
        <end position="202"/>
    </location>
</feature>
<feature type="active site" description="Proton acceptor" evidence="1">
    <location>
        <position position="19"/>
    </location>
</feature>
<feature type="binding site" evidence="1">
    <location>
        <position position="14"/>
    </location>
    <ligand>
        <name>tRNA</name>
        <dbReference type="ChEBI" id="CHEBI:17843"/>
    </ligand>
</feature>
<feature type="binding site" evidence="1">
    <location>
        <position position="64"/>
    </location>
    <ligand>
        <name>tRNA</name>
        <dbReference type="ChEBI" id="CHEBI:17843"/>
    </ligand>
</feature>
<feature type="binding site" evidence="1">
    <location>
        <position position="66"/>
    </location>
    <ligand>
        <name>tRNA</name>
        <dbReference type="ChEBI" id="CHEBI:17843"/>
    </ligand>
</feature>
<feature type="binding site" evidence="1">
    <location>
        <position position="112"/>
    </location>
    <ligand>
        <name>tRNA</name>
        <dbReference type="ChEBI" id="CHEBI:17843"/>
    </ligand>
</feature>
<feature type="site" description="Discriminates between blocked and unblocked aminoacyl-tRNA" evidence="1">
    <location>
        <position position="9"/>
    </location>
</feature>
<feature type="site" description="Stabilizes the basic form of H active site to accept a proton" evidence="1">
    <location>
        <position position="91"/>
    </location>
</feature>
<protein>
    <recommendedName>
        <fullName evidence="1">Peptidyl-tRNA hydrolase</fullName>
        <shortName evidence="1">Pth</shortName>
        <ecNumber evidence="1">3.1.1.29</ecNumber>
    </recommendedName>
</protein>
<sequence>MRLIVGLGNPGARYAGNRHNIGFLAVDAIARQHRASPFRHRFQGEAAEVVLGTERAILLKPSTFMNESGRAVSEAQRFYKIPLADVIVLHDELDLAPAKLRVKRGGGNAGHNGLRSITAQCGNDYRRVRLGIGHPGDKALVHAYVLNDFGKAELPWVEDLCRAVADHAALLAAGEDASFQNKVHLAMAGRGWDDVKTLGARN</sequence>
<accession>B1M1C0</accession>
<organism>
    <name type="scientific">Methylobacterium radiotolerans (strain ATCC 27329 / DSM 1819 / JCM 2831 / NBRC 15690 / NCIMB 10815 / 0-1)</name>
    <dbReference type="NCBI Taxonomy" id="426355"/>
    <lineage>
        <taxon>Bacteria</taxon>
        <taxon>Pseudomonadati</taxon>
        <taxon>Pseudomonadota</taxon>
        <taxon>Alphaproteobacteria</taxon>
        <taxon>Hyphomicrobiales</taxon>
        <taxon>Methylobacteriaceae</taxon>
        <taxon>Methylobacterium</taxon>
    </lineage>
</organism>
<comment type="function">
    <text evidence="1">Hydrolyzes ribosome-free peptidyl-tRNAs (with 1 or more amino acids incorporated), which drop off the ribosome during protein synthesis, or as a result of ribosome stalling.</text>
</comment>
<comment type="function">
    <text evidence="1">Catalyzes the release of premature peptidyl moieties from peptidyl-tRNA molecules trapped in stalled 50S ribosomal subunits, and thus maintains levels of free tRNAs and 50S ribosomes.</text>
</comment>
<comment type="catalytic activity">
    <reaction evidence="1">
        <text>an N-acyl-L-alpha-aminoacyl-tRNA + H2O = an N-acyl-L-amino acid + a tRNA + H(+)</text>
        <dbReference type="Rhea" id="RHEA:54448"/>
        <dbReference type="Rhea" id="RHEA-COMP:10123"/>
        <dbReference type="Rhea" id="RHEA-COMP:13883"/>
        <dbReference type="ChEBI" id="CHEBI:15377"/>
        <dbReference type="ChEBI" id="CHEBI:15378"/>
        <dbReference type="ChEBI" id="CHEBI:59874"/>
        <dbReference type="ChEBI" id="CHEBI:78442"/>
        <dbReference type="ChEBI" id="CHEBI:138191"/>
        <dbReference type="EC" id="3.1.1.29"/>
    </reaction>
</comment>
<comment type="subunit">
    <text evidence="1">Monomer.</text>
</comment>
<comment type="subcellular location">
    <subcellularLocation>
        <location evidence="1">Cytoplasm</location>
    </subcellularLocation>
</comment>
<comment type="similarity">
    <text evidence="1">Belongs to the PTH family.</text>
</comment>
<keyword id="KW-0963">Cytoplasm</keyword>
<keyword id="KW-0378">Hydrolase</keyword>
<keyword id="KW-0694">RNA-binding</keyword>
<keyword id="KW-0820">tRNA-binding</keyword>
<name>PTH_METRJ</name>
<dbReference type="EC" id="3.1.1.29" evidence="1"/>
<dbReference type="EMBL" id="CP001001">
    <property type="protein sequence ID" value="ACB26095.1"/>
    <property type="molecule type" value="Genomic_DNA"/>
</dbReference>
<dbReference type="RefSeq" id="WP_012321051.1">
    <property type="nucleotide sequence ID" value="NC_010505.1"/>
</dbReference>
<dbReference type="SMR" id="B1M1C0"/>
<dbReference type="STRING" id="426355.Mrad2831_4125"/>
<dbReference type="GeneID" id="6140183"/>
<dbReference type="KEGG" id="mrd:Mrad2831_4125"/>
<dbReference type="eggNOG" id="COG0193">
    <property type="taxonomic scope" value="Bacteria"/>
</dbReference>
<dbReference type="HOGENOM" id="CLU_062456_1_0_5"/>
<dbReference type="OrthoDB" id="9800507at2"/>
<dbReference type="Proteomes" id="UP000006589">
    <property type="component" value="Chromosome"/>
</dbReference>
<dbReference type="GO" id="GO:0005737">
    <property type="term" value="C:cytoplasm"/>
    <property type="evidence" value="ECO:0007669"/>
    <property type="project" value="UniProtKB-SubCell"/>
</dbReference>
<dbReference type="GO" id="GO:0004045">
    <property type="term" value="F:peptidyl-tRNA hydrolase activity"/>
    <property type="evidence" value="ECO:0007669"/>
    <property type="project" value="UniProtKB-UniRule"/>
</dbReference>
<dbReference type="GO" id="GO:0000049">
    <property type="term" value="F:tRNA binding"/>
    <property type="evidence" value="ECO:0007669"/>
    <property type="project" value="UniProtKB-UniRule"/>
</dbReference>
<dbReference type="GO" id="GO:0006515">
    <property type="term" value="P:protein quality control for misfolded or incompletely synthesized proteins"/>
    <property type="evidence" value="ECO:0007669"/>
    <property type="project" value="UniProtKB-UniRule"/>
</dbReference>
<dbReference type="GO" id="GO:0072344">
    <property type="term" value="P:rescue of stalled ribosome"/>
    <property type="evidence" value="ECO:0007669"/>
    <property type="project" value="UniProtKB-UniRule"/>
</dbReference>
<dbReference type="CDD" id="cd00462">
    <property type="entry name" value="PTH"/>
    <property type="match status" value="1"/>
</dbReference>
<dbReference type="FunFam" id="3.40.50.1470:FF:000001">
    <property type="entry name" value="Peptidyl-tRNA hydrolase"/>
    <property type="match status" value="1"/>
</dbReference>
<dbReference type="Gene3D" id="3.40.50.1470">
    <property type="entry name" value="Peptidyl-tRNA hydrolase"/>
    <property type="match status" value="1"/>
</dbReference>
<dbReference type="HAMAP" id="MF_00083">
    <property type="entry name" value="Pept_tRNA_hydro_bact"/>
    <property type="match status" value="1"/>
</dbReference>
<dbReference type="InterPro" id="IPR001328">
    <property type="entry name" value="Pept_tRNA_hydro"/>
</dbReference>
<dbReference type="InterPro" id="IPR018171">
    <property type="entry name" value="Pept_tRNA_hydro_CS"/>
</dbReference>
<dbReference type="InterPro" id="IPR036416">
    <property type="entry name" value="Pept_tRNA_hydro_sf"/>
</dbReference>
<dbReference type="NCBIfam" id="TIGR00447">
    <property type="entry name" value="pth"/>
    <property type="match status" value="1"/>
</dbReference>
<dbReference type="PANTHER" id="PTHR17224">
    <property type="entry name" value="PEPTIDYL-TRNA HYDROLASE"/>
    <property type="match status" value="1"/>
</dbReference>
<dbReference type="PANTHER" id="PTHR17224:SF1">
    <property type="entry name" value="PEPTIDYL-TRNA HYDROLASE"/>
    <property type="match status" value="1"/>
</dbReference>
<dbReference type="Pfam" id="PF01195">
    <property type="entry name" value="Pept_tRNA_hydro"/>
    <property type="match status" value="1"/>
</dbReference>
<dbReference type="SUPFAM" id="SSF53178">
    <property type="entry name" value="Peptidyl-tRNA hydrolase-like"/>
    <property type="match status" value="1"/>
</dbReference>
<dbReference type="PROSITE" id="PS01195">
    <property type="entry name" value="PEPT_TRNA_HYDROL_1"/>
    <property type="match status" value="1"/>
</dbReference>
<dbReference type="PROSITE" id="PS01196">
    <property type="entry name" value="PEPT_TRNA_HYDROL_2"/>
    <property type="match status" value="1"/>
</dbReference>
<proteinExistence type="inferred from homology"/>